<gene>
    <name type="primary">MED11</name>
    <name type="ordered locus">AEL309W</name>
</gene>
<evidence type="ECO:0000250" key="1"/>
<evidence type="ECO:0000250" key="2">
    <source>
        <dbReference type="UniProtKB" id="Q99278"/>
    </source>
</evidence>
<evidence type="ECO:0000305" key="3"/>
<organism>
    <name type="scientific">Eremothecium gossypii (strain ATCC 10895 / CBS 109.51 / FGSC 9923 / NRRL Y-1056)</name>
    <name type="common">Yeast</name>
    <name type="synonym">Ashbya gossypii</name>
    <dbReference type="NCBI Taxonomy" id="284811"/>
    <lineage>
        <taxon>Eukaryota</taxon>
        <taxon>Fungi</taxon>
        <taxon>Dikarya</taxon>
        <taxon>Ascomycota</taxon>
        <taxon>Saccharomycotina</taxon>
        <taxon>Saccharomycetes</taxon>
        <taxon>Saccharomycetales</taxon>
        <taxon>Saccharomycetaceae</taxon>
        <taxon>Eremothecium</taxon>
    </lineage>
</organism>
<name>MED11_EREGS</name>
<comment type="function">
    <text evidence="2">Component of the Mediator complex, a coactivator involved in the regulated transcription of nearly all RNA polymerase II-dependent genes. Mediator functions as a bridge to convey information from gene-specific regulatory proteins to the basal RNA polymerase II transcription machinery. Mediator is recruited to promoters by direct interactions with regulatory proteins and serves as a scaffold for the assembly of a functional pre-initiation complex with RNA polymerase II and the general transcription factors (By similarity).</text>
</comment>
<comment type="subunit">
    <text evidence="1">Component of the Mediator complex.</text>
</comment>
<comment type="subcellular location">
    <subcellularLocation>
        <location evidence="1">Nucleus</location>
    </subcellularLocation>
</comment>
<comment type="similarity">
    <text evidence="3">Belongs to the Mediator complex subunit 11 family.</text>
</comment>
<accession>Q758R2</accession>
<dbReference type="EMBL" id="AE016818">
    <property type="protein sequence ID" value="AAS52375.2"/>
    <property type="molecule type" value="Genomic_DNA"/>
</dbReference>
<dbReference type="RefSeq" id="NP_984551.2">
    <property type="nucleotide sequence ID" value="NM_209904.2"/>
</dbReference>
<dbReference type="SMR" id="Q758R2"/>
<dbReference type="FunCoup" id="Q758R2">
    <property type="interactions" value="138"/>
</dbReference>
<dbReference type="STRING" id="284811.Q758R2"/>
<dbReference type="EnsemblFungi" id="AAS52375">
    <property type="protein sequence ID" value="AAS52375"/>
    <property type="gene ID" value="AGOS_AEL309W"/>
</dbReference>
<dbReference type="GeneID" id="4620726"/>
<dbReference type="KEGG" id="ago:AGOS_AEL309W"/>
<dbReference type="eggNOG" id="ENOG502S3YW">
    <property type="taxonomic scope" value="Eukaryota"/>
</dbReference>
<dbReference type="HOGENOM" id="CLU_121031_1_0_1"/>
<dbReference type="InParanoid" id="Q758R2"/>
<dbReference type="OMA" id="IMDDNIG"/>
<dbReference type="OrthoDB" id="5418434at2759"/>
<dbReference type="Proteomes" id="UP000000591">
    <property type="component" value="Chromosome V"/>
</dbReference>
<dbReference type="GO" id="GO:0016592">
    <property type="term" value="C:mediator complex"/>
    <property type="evidence" value="ECO:0007669"/>
    <property type="project" value="InterPro"/>
</dbReference>
<dbReference type="GO" id="GO:0003712">
    <property type="term" value="F:transcription coregulator activity"/>
    <property type="evidence" value="ECO:0007669"/>
    <property type="project" value="InterPro"/>
</dbReference>
<dbReference type="GO" id="GO:0006357">
    <property type="term" value="P:regulation of transcription by RNA polymerase II"/>
    <property type="evidence" value="ECO:0007669"/>
    <property type="project" value="InterPro"/>
</dbReference>
<dbReference type="Gene3D" id="1.10.287.3490">
    <property type="match status" value="1"/>
</dbReference>
<dbReference type="InterPro" id="IPR019404">
    <property type="entry name" value="Mediator_Med11"/>
</dbReference>
<dbReference type="Pfam" id="PF10280">
    <property type="entry name" value="Med11"/>
    <property type="match status" value="1"/>
</dbReference>
<feature type="chain" id="PRO_0000304317" description="Mediator of RNA polymerase II transcription subunit 11">
    <location>
        <begin position="1"/>
        <end position="113"/>
    </location>
</feature>
<proteinExistence type="inferred from homology"/>
<reference key="1">
    <citation type="journal article" date="2004" name="Science">
        <title>The Ashbya gossypii genome as a tool for mapping the ancient Saccharomyces cerevisiae genome.</title>
        <authorList>
            <person name="Dietrich F.S."/>
            <person name="Voegeli S."/>
            <person name="Brachat S."/>
            <person name="Lerch A."/>
            <person name="Gates K."/>
            <person name="Steiner S."/>
            <person name="Mohr C."/>
            <person name="Poehlmann R."/>
            <person name="Luedi P."/>
            <person name="Choi S."/>
            <person name="Wing R.A."/>
            <person name="Flavier A."/>
            <person name="Gaffney T.D."/>
            <person name="Philippsen P."/>
        </authorList>
    </citation>
    <scope>NUCLEOTIDE SEQUENCE [LARGE SCALE GENOMIC DNA]</scope>
    <source>
        <strain>ATCC 10895 / CBS 109.51 / FGSC 9923 / NRRL Y-1056</strain>
    </source>
</reference>
<reference key="2">
    <citation type="journal article" date="2013" name="G3 (Bethesda)">
        <title>Genomes of Ashbya fungi isolated from insects reveal four mating-type loci, numerous translocations, lack of transposons, and distinct gene duplications.</title>
        <authorList>
            <person name="Dietrich F.S."/>
            <person name="Voegeli S."/>
            <person name="Kuo S."/>
            <person name="Philippsen P."/>
        </authorList>
    </citation>
    <scope>GENOME REANNOTATION</scope>
    <scope>SEQUENCE REVISION TO 42-44</scope>
    <source>
        <strain>ATCC 10895 / CBS 109.51 / FGSC 9923 / NRRL Y-1056</strain>
    </source>
</reference>
<keyword id="KW-0010">Activator</keyword>
<keyword id="KW-0539">Nucleus</keyword>
<keyword id="KW-1185">Reference proteome</keyword>
<keyword id="KW-0804">Transcription</keyword>
<keyword id="KW-0805">Transcription regulation</keyword>
<protein>
    <recommendedName>
        <fullName>Mediator of RNA polymerase II transcription subunit 11</fullName>
    </recommendedName>
    <alternativeName>
        <fullName>Mediator complex subunit 11</fullName>
    </alternativeName>
</protein>
<sequence>MPQPDSVKARLAALDRIDDELCAVLQHAQATIGALAELKRGHAALQPQLEQHVRDYYRTLEHSTVALRNEIRELDAAVGTQLLPVNIGKRAVGQDQEKLSEQLAQMDKYVGSM</sequence>